<gene>
    <name type="primary">ncdn</name>
</gene>
<protein>
    <recommendedName>
        <fullName>Neurochondrin</fullName>
    </recommendedName>
</protein>
<name>NCDN_XENLA</name>
<organism>
    <name type="scientific">Xenopus laevis</name>
    <name type="common">African clawed frog</name>
    <dbReference type="NCBI Taxonomy" id="8355"/>
    <lineage>
        <taxon>Eukaryota</taxon>
        <taxon>Metazoa</taxon>
        <taxon>Chordata</taxon>
        <taxon>Craniata</taxon>
        <taxon>Vertebrata</taxon>
        <taxon>Euteleostomi</taxon>
        <taxon>Amphibia</taxon>
        <taxon>Batrachia</taxon>
        <taxon>Anura</taxon>
        <taxon>Pipoidea</taxon>
        <taxon>Pipidae</taxon>
        <taxon>Xenopodinae</taxon>
        <taxon>Xenopus</taxon>
        <taxon>Xenopus</taxon>
    </lineage>
</organism>
<comment type="function">
    <text evidence="1">Probably involved in signal transduction, in the nervous system. Required for the spatial learning process. May also be involved in neurite outgrowth (By similarity).</text>
</comment>
<comment type="subcellular location">
    <subcellularLocation>
        <location evidence="2">Cytoplasm</location>
        <location evidence="2">Cytosol</location>
    </subcellularLocation>
    <subcellularLocation>
        <location evidence="2">Cell projection</location>
        <location evidence="2">Dendrite</location>
    </subcellularLocation>
    <subcellularLocation>
        <location evidence="2">Postsynapse</location>
    </subcellularLocation>
</comment>
<comment type="similarity">
    <text evidence="3">Belongs to the neurochondrin family.</text>
</comment>
<reference key="1">
    <citation type="submission" date="2004-09" db="EMBL/GenBank/DDBJ databases">
        <authorList>
            <consortium name="NIH - Xenopus Gene Collection (XGC) project"/>
        </authorList>
    </citation>
    <scope>NUCLEOTIDE SEQUENCE [LARGE SCALE MRNA]</scope>
    <source>
        <tissue>Embryo</tissue>
    </source>
</reference>
<dbReference type="EMBL" id="BC082624">
    <property type="protein sequence ID" value="AAH82624.1"/>
    <property type="molecule type" value="mRNA"/>
</dbReference>
<dbReference type="RefSeq" id="NP_001087970.1">
    <property type="nucleotide sequence ID" value="NM_001094501.1"/>
</dbReference>
<dbReference type="SMR" id="Q640K1"/>
<dbReference type="DNASU" id="494655"/>
<dbReference type="GeneID" id="494655"/>
<dbReference type="KEGG" id="xla:494655"/>
<dbReference type="AGR" id="Xenbase:XB-GENE-968623"/>
<dbReference type="CTD" id="494655"/>
<dbReference type="Xenbase" id="XB-GENE-968623">
    <property type="gene designation" value="ncdn.S"/>
</dbReference>
<dbReference type="OrthoDB" id="8186546at2759"/>
<dbReference type="Proteomes" id="UP000186698">
    <property type="component" value="Chromosome 2S"/>
</dbReference>
<dbReference type="Bgee" id="494655">
    <property type="expression patterns" value="Expressed in blastula and 19 other cell types or tissues"/>
</dbReference>
<dbReference type="GO" id="GO:0005829">
    <property type="term" value="C:cytosol"/>
    <property type="evidence" value="ECO:0000250"/>
    <property type="project" value="UniProtKB"/>
</dbReference>
<dbReference type="GO" id="GO:0030425">
    <property type="term" value="C:dendrite"/>
    <property type="evidence" value="ECO:0000250"/>
    <property type="project" value="UniProtKB"/>
</dbReference>
<dbReference type="GO" id="GO:0043025">
    <property type="term" value="C:neuronal cell body"/>
    <property type="evidence" value="ECO:0000250"/>
    <property type="project" value="UniProtKB"/>
</dbReference>
<dbReference type="GO" id="GO:0098794">
    <property type="term" value="C:postsynapse"/>
    <property type="evidence" value="ECO:0007669"/>
    <property type="project" value="UniProtKB-SubCell"/>
</dbReference>
<dbReference type="GO" id="GO:0031175">
    <property type="term" value="P:neuron projection development"/>
    <property type="evidence" value="ECO:0000250"/>
    <property type="project" value="UniProtKB"/>
</dbReference>
<dbReference type="GO" id="GO:0048168">
    <property type="term" value="P:regulation of neuronal synaptic plasticity"/>
    <property type="evidence" value="ECO:0000318"/>
    <property type="project" value="GO_Central"/>
</dbReference>
<dbReference type="InterPro" id="IPR008709">
    <property type="entry name" value="Neurochondrin"/>
</dbReference>
<dbReference type="PANTHER" id="PTHR13109">
    <property type="entry name" value="NEUROCHONDRIN"/>
    <property type="match status" value="1"/>
</dbReference>
<dbReference type="PANTHER" id="PTHR13109:SF7">
    <property type="entry name" value="NEUROCHONDRIN"/>
    <property type="match status" value="1"/>
</dbReference>
<dbReference type="Pfam" id="PF05536">
    <property type="entry name" value="Neurochondrin"/>
    <property type="match status" value="1"/>
</dbReference>
<proteinExistence type="evidence at transcript level"/>
<accession>Q640K1</accession>
<evidence type="ECO:0000250" key="1"/>
<evidence type="ECO:0000250" key="2">
    <source>
        <dbReference type="UniProtKB" id="O35095"/>
    </source>
</evidence>
<evidence type="ECO:0000305" key="3"/>
<feature type="chain" id="PRO_0000324621" description="Neurochondrin">
    <location>
        <begin position="1"/>
        <end position="720"/>
    </location>
</feature>
<keyword id="KW-0966">Cell projection</keyword>
<keyword id="KW-0963">Cytoplasm</keyword>
<keyword id="KW-1185">Reference proteome</keyword>
<keyword id="KW-0770">Synapse</keyword>
<sequence length="720" mass="79957">MPNTTEEQSDEVNNLALEKCLKVLQEAQTDNEQFAALLLVTKCAQAQEINNETRRRIFDAVGFTFPNRLLFSNSVPEGCPQNLFKSLGITLLACFSTDPVLAVHPQVVNKIPIFNETINISCQSGNKEVVSMVEDAYQCLLGILASPQGPKNLLSHGSIPYLCQAYMNRNHFWEKALQILTSLLTVLPPKCWKKSCTDLQLLLTRLSEEFGKEEGEWKFQLADLLPIFLPPSPILLETSWGKQCLKQLCKGLLKILSNKLSISQRDPALKLAACLANSYGSSWIMAENKVVRSRFLALIVNLACVEVRMALEEPEPLTSRQSVITACYALVEMGILACTKEEKHPVLGKEQKLQLIGVMQEACAAIIYYLQQVGWEKQEDPFLLASVRLLGAWLAEETACLKLEVIQLLPFLVHYMRTCHQRSVICSKLPKEVSQVALLSNSWGNIWPGDAIRFLLPALCHLSAEEVPRKVLISEGVPALLCDYFQLQWDVLFAEDEPEGLQSAAELSLQTCCGVFLNLVVTEPTFVGQESCFVSLMKLLMQSLPTLLTKEGHLVLVANFSTLGLMMSRLLAENSVLHESNAEEFFKAAIHFLSHSHVPSCQTDAGKPVITLSESYSEAWEEISELWFLGVQAFSSCVHLLPWLSALVLRSSWLQDTLCLLDNVSPKSVDSDLVTALQGMLTELAQSSSCCRDVIREKGGAEKANLYGMAALEQCLAELS</sequence>